<comment type="subunit">
    <text evidence="3">The cyanobacterial PSI reaction center is composed of one copy each of PsaA,B,C,D,E,F,I,J,K,L,M and X, and forms dimeric and tetrameric complexes.</text>
</comment>
<comment type="subcellular location">
    <subcellularLocation>
        <location evidence="3">Cellular thylakoid membrane</location>
        <topology evidence="1">Multi-pass membrane protein</topology>
    </subcellularLocation>
</comment>
<comment type="similarity">
    <text evidence="4">Belongs to the PsaG/PsaK family.</text>
</comment>
<protein>
    <recommendedName>
        <fullName>Photosystem I reaction center subunit PsaK 1</fullName>
    </recommendedName>
    <alternativeName>
        <fullName>Photosystem I subunit X 1</fullName>
    </alternativeName>
</protein>
<proteinExistence type="evidence at protein level"/>
<organism>
    <name type="scientific">Nostoc sp. (strain PCC 7120 / SAG 25.82 / UTEX 2576)</name>
    <dbReference type="NCBI Taxonomy" id="103690"/>
    <lineage>
        <taxon>Bacteria</taxon>
        <taxon>Bacillati</taxon>
        <taxon>Cyanobacteriota</taxon>
        <taxon>Cyanophyceae</taxon>
        <taxon>Nostocales</taxon>
        <taxon>Nostocaceae</taxon>
        <taxon>Nostoc</taxon>
    </lineage>
</organism>
<keyword id="KW-0002">3D-structure</keyword>
<keyword id="KW-0903">Direct protein sequencing</keyword>
<keyword id="KW-0472">Membrane</keyword>
<keyword id="KW-0602">Photosynthesis</keyword>
<keyword id="KW-0603">Photosystem I</keyword>
<keyword id="KW-1185">Reference proteome</keyword>
<keyword id="KW-0793">Thylakoid</keyword>
<keyword id="KW-0812">Transmembrane</keyword>
<keyword id="KW-1133">Transmembrane helix</keyword>
<dbReference type="EMBL" id="BA000019">
    <property type="protein sequence ID" value="BAB76474.1"/>
    <property type="molecule type" value="Genomic_DNA"/>
</dbReference>
<dbReference type="PIR" id="AG2402">
    <property type="entry name" value="AG2402"/>
</dbReference>
<dbReference type="PDB" id="6JEO">
    <property type="method" value="EM"/>
    <property type="resolution" value="3.30 A"/>
    <property type="chains" value="aK/bK/cK/dK=1-86"/>
</dbReference>
<dbReference type="PDB" id="6K61">
    <property type="method" value="EM"/>
    <property type="resolution" value="2.37 A"/>
    <property type="chains" value="K/k=1-86"/>
</dbReference>
<dbReference type="PDBsum" id="6JEO"/>
<dbReference type="PDBsum" id="6K61"/>
<dbReference type="EMDB" id="EMD-10461"/>
<dbReference type="EMDB" id="EMD-9807"/>
<dbReference type="EMDB" id="EMD-9918"/>
<dbReference type="SMR" id="P58583"/>
<dbReference type="STRING" id="103690.gene:10496828"/>
<dbReference type="KEGG" id="ana:asr4775"/>
<dbReference type="eggNOG" id="ENOG5032YIH">
    <property type="taxonomic scope" value="Bacteria"/>
</dbReference>
<dbReference type="OrthoDB" id="561382at2"/>
<dbReference type="Proteomes" id="UP000002483">
    <property type="component" value="Chromosome"/>
</dbReference>
<dbReference type="GO" id="GO:0009522">
    <property type="term" value="C:photosystem I"/>
    <property type="evidence" value="ECO:0007669"/>
    <property type="project" value="UniProtKB-KW"/>
</dbReference>
<dbReference type="GO" id="GO:0031676">
    <property type="term" value="C:plasma membrane-derived thylakoid membrane"/>
    <property type="evidence" value="ECO:0007669"/>
    <property type="project" value="UniProtKB-SubCell"/>
</dbReference>
<dbReference type="GO" id="GO:0015979">
    <property type="term" value="P:photosynthesis"/>
    <property type="evidence" value="ECO:0007669"/>
    <property type="project" value="UniProtKB-UniRule"/>
</dbReference>
<dbReference type="Gene3D" id="1.20.860.20">
    <property type="entry name" value="Photosystem I PsaK, reaction centre"/>
    <property type="match status" value="1"/>
</dbReference>
<dbReference type="HAMAP" id="MF_00474">
    <property type="entry name" value="PSI_PsaK"/>
    <property type="match status" value="1"/>
</dbReference>
<dbReference type="InterPro" id="IPR035982">
    <property type="entry name" value="PSI_centre_PsaK_sf"/>
</dbReference>
<dbReference type="InterPro" id="IPR000549">
    <property type="entry name" value="PSI_PsaG/PsaK"/>
</dbReference>
<dbReference type="InterPro" id="IPR017492">
    <property type="entry name" value="PSI_PsaK"/>
</dbReference>
<dbReference type="InterPro" id="IPR037101">
    <property type="entry name" value="PSI_PsaK_bact"/>
</dbReference>
<dbReference type="NCBIfam" id="TIGR03049">
    <property type="entry name" value="PS_I_psaK"/>
    <property type="match status" value="1"/>
</dbReference>
<dbReference type="Pfam" id="PF01241">
    <property type="entry name" value="PSI_PSAK"/>
    <property type="match status" value="1"/>
</dbReference>
<dbReference type="SUPFAM" id="SSF81563">
    <property type="entry name" value="Photosystem I reaction center subunit X, PsaK"/>
    <property type="match status" value="1"/>
</dbReference>
<gene>
    <name type="primary">psaK1</name>
    <name type="ordered locus">asr4775</name>
</gene>
<name>PSAK1_NOSS1</name>
<reference key="1">
    <citation type="journal article" date="2001" name="DNA Res.">
        <title>Complete genomic sequence of the filamentous nitrogen-fixing cyanobacterium Anabaena sp. strain PCC 7120.</title>
        <authorList>
            <person name="Kaneko T."/>
            <person name="Nakamura Y."/>
            <person name="Wolk C.P."/>
            <person name="Kuritz T."/>
            <person name="Sasamoto S."/>
            <person name="Watanabe A."/>
            <person name="Iriguchi M."/>
            <person name="Ishikawa A."/>
            <person name="Kawashima K."/>
            <person name="Kimura T."/>
            <person name="Kishida Y."/>
            <person name="Kohara M."/>
            <person name="Matsumoto M."/>
            <person name="Matsuno A."/>
            <person name="Muraki A."/>
            <person name="Nakazaki N."/>
            <person name="Shimpo S."/>
            <person name="Sugimoto M."/>
            <person name="Takazawa M."/>
            <person name="Yamada M."/>
            <person name="Yasuda M."/>
            <person name="Tabata S."/>
        </authorList>
    </citation>
    <scope>NUCLEOTIDE SEQUENCE [LARGE SCALE GENOMIC DNA]</scope>
    <source>
        <strain>PCC 7120 / SAG 25.82 / UTEX 2576</strain>
    </source>
</reference>
<reference key="2">
    <citation type="journal article" date="2014" name="Proc. Natl. Acad. Sci. U.S.A.">
        <title>Attachment of phycobilisomes in an antenna-photosystem I supercomplex of cyanobacteria.</title>
        <authorList>
            <person name="Watanabe M."/>
            <person name="Semchonok D.A."/>
            <person name="Webber-Birungi M.T."/>
            <person name="Ehira S."/>
            <person name="Kondo K."/>
            <person name="Narikawa R."/>
            <person name="Ohmori M."/>
            <person name="Boekema E.J."/>
            <person name="Ikeuchi M."/>
        </authorList>
    </citation>
    <scope>PROTEIN SEQUENCE OF 9-17</scope>
    <scope>SUBUNIT</scope>
    <scope>SUBCELLULAR LOCATION</scope>
    <source>
        <strain>PCC 7120 / SAG 25.82 / UTEX 2576</strain>
    </source>
</reference>
<evidence type="ECO:0000250" key="1"/>
<evidence type="ECO:0000255" key="2"/>
<evidence type="ECO:0000269" key="3">
    <source>
    </source>
</evidence>
<evidence type="ECO:0000305" key="4"/>
<evidence type="ECO:0007829" key="5">
    <source>
        <dbReference type="PDB" id="6K61"/>
    </source>
</evidence>
<sequence length="86" mass="8847">MLTSTLLAAATTPLEWSPTVGIIMVIANVIAITFGRQTIKYPSAEPALPSAKFFGGFGAPALLATTAFGHILGVGLVLGLHNLGRI</sequence>
<accession>P58583</accession>
<feature type="propeptide" id="PRO_0000029396" evidence="1">
    <location>
        <begin position="1"/>
        <end position="8"/>
    </location>
</feature>
<feature type="chain" id="PRO_0000029397" description="Photosystem I reaction center subunit PsaK 1">
    <location>
        <begin position="9"/>
        <end position="86"/>
    </location>
</feature>
<feature type="transmembrane region" description="Helical" evidence="2">
    <location>
        <begin position="14"/>
        <end position="34"/>
    </location>
</feature>
<feature type="transmembrane region" description="Helical" evidence="2">
    <location>
        <begin position="60"/>
        <end position="80"/>
    </location>
</feature>
<feature type="helix" evidence="5">
    <location>
        <begin position="18"/>
        <end position="38"/>
    </location>
</feature>
<feature type="strand" evidence="5">
    <location>
        <begin position="45"/>
        <end position="47"/>
    </location>
</feature>
<feature type="strand" evidence="5">
    <location>
        <begin position="51"/>
        <end position="56"/>
    </location>
</feature>
<feature type="helix" evidence="5">
    <location>
        <begin position="59"/>
        <end position="83"/>
    </location>
</feature>